<evidence type="ECO:0000255" key="1">
    <source>
        <dbReference type="HAMAP-Rule" id="MF_00395"/>
    </source>
</evidence>
<comment type="function">
    <text evidence="1">Component of the cytochrome b6-f complex, which mediates electron transfer between photosystem II (PSII) and photosystem I (PSI), cyclic electron flow around PSI, and state transitions.</text>
</comment>
<comment type="subunit">
    <text evidence="1">The 4 large subunits of the cytochrome b6-f complex are cytochrome b6, subunit IV (17 kDa polypeptide, PetD), cytochrome f and the Rieske protein, while the 4 small subunits are PetG, PetL, PetM and PetN. The complex functions as a dimer.</text>
</comment>
<comment type="subcellular location">
    <subcellularLocation>
        <location evidence="1">Plastid</location>
        <location evidence="1">Chloroplast thylakoid membrane</location>
        <topology evidence="1">Single-pass membrane protein</topology>
    </subcellularLocation>
</comment>
<comment type="similarity">
    <text evidence="1">Belongs to the PetN family.</text>
</comment>
<geneLocation type="chloroplast"/>
<proteinExistence type="inferred from homology"/>
<dbReference type="EMBL" id="DQ821119">
    <property type="protein sequence ID" value="ABG79592.1"/>
    <property type="molecule type" value="Genomic_DNA"/>
</dbReference>
<dbReference type="RefSeq" id="YP_001023693.1">
    <property type="nucleotide sequence ID" value="NC_008829.1"/>
</dbReference>
<dbReference type="SMR" id="A2T325"/>
<dbReference type="GeneID" id="4788156"/>
<dbReference type="GO" id="GO:0009535">
    <property type="term" value="C:chloroplast thylakoid membrane"/>
    <property type="evidence" value="ECO:0007669"/>
    <property type="project" value="UniProtKB-SubCell"/>
</dbReference>
<dbReference type="GO" id="GO:0009512">
    <property type="term" value="C:cytochrome b6f complex"/>
    <property type="evidence" value="ECO:0007669"/>
    <property type="project" value="InterPro"/>
</dbReference>
<dbReference type="GO" id="GO:0045158">
    <property type="term" value="F:electron transporter, transferring electrons within cytochrome b6/f complex of photosystem II activity"/>
    <property type="evidence" value="ECO:0007669"/>
    <property type="project" value="InterPro"/>
</dbReference>
<dbReference type="GO" id="GO:0017004">
    <property type="term" value="P:cytochrome complex assembly"/>
    <property type="evidence" value="ECO:0007669"/>
    <property type="project" value="UniProtKB-UniRule"/>
</dbReference>
<dbReference type="GO" id="GO:0015979">
    <property type="term" value="P:photosynthesis"/>
    <property type="evidence" value="ECO:0007669"/>
    <property type="project" value="UniProtKB-KW"/>
</dbReference>
<dbReference type="HAMAP" id="MF_00395">
    <property type="entry name" value="Cytb6_f_PetN"/>
    <property type="match status" value="1"/>
</dbReference>
<dbReference type="InterPro" id="IPR036143">
    <property type="entry name" value="Cytochr_b6-f_cplx_su8_sf"/>
</dbReference>
<dbReference type="InterPro" id="IPR005497">
    <property type="entry name" value="Cytochrome_b6-f_cplx_su8"/>
</dbReference>
<dbReference type="Pfam" id="PF03742">
    <property type="entry name" value="PetN"/>
    <property type="match status" value="1"/>
</dbReference>
<dbReference type="SUPFAM" id="SSF103451">
    <property type="entry name" value="PetN subunit of the cytochrome b6f complex"/>
    <property type="match status" value="1"/>
</dbReference>
<gene>
    <name evidence="1" type="primary">petN</name>
</gene>
<reference key="1">
    <citation type="journal article" date="2007" name="Am. Fern J.">
        <title>The complete plastid genome sequence of Angiopteris evecta (G. Forst.) Hoffm. (Marattiaceae).</title>
        <authorList>
            <person name="Roper J.M."/>
            <person name="Hansen S.K."/>
            <person name="Wolf P.G."/>
            <person name="Karol K.G."/>
            <person name="Mandoli D.F."/>
            <person name="Everett K.D.E."/>
            <person name="Kuehl J."/>
            <person name="Boore J.L."/>
        </authorList>
    </citation>
    <scope>NUCLEOTIDE SEQUENCE [LARGE SCALE GENOMIC DNA]</scope>
</reference>
<feature type="chain" id="PRO_0000355420" description="Cytochrome b6-f complex subunit 8">
    <location>
        <begin position="1"/>
        <end position="29"/>
    </location>
</feature>
<feature type="transmembrane region" description="Helical" evidence="1">
    <location>
        <begin position="3"/>
        <end position="23"/>
    </location>
</feature>
<protein>
    <recommendedName>
        <fullName evidence="1">Cytochrome b6-f complex subunit 8</fullName>
    </recommendedName>
    <alternativeName>
        <fullName evidence="1">Cytochrome b6-f complex subunit PetN</fullName>
    </alternativeName>
    <alternativeName>
        <fullName evidence="1">Cytochrome b6-f complex subunit VIII</fullName>
    </alternativeName>
</protein>
<sequence length="29" mass="3170">MDIVSIAWAALMVVFTFSLSLVVWGRSGL</sequence>
<organism>
    <name type="scientific">Angiopteris evecta</name>
    <name type="common">Mule's foot fern</name>
    <name type="synonym">Polypodium evectum</name>
    <dbReference type="NCBI Taxonomy" id="13825"/>
    <lineage>
        <taxon>Eukaryota</taxon>
        <taxon>Viridiplantae</taxon>
        <taxon>Streptophyta</taxon>
        <taxon>Embryophyta</taxon>
        <taxon>Tracheophyta</taxon>
        <taxon>Polypodiopsida</taxon>
        <taxon>Marattiidae</taxon>
        <taxon>Marattiales</taxon>
        <taxon>Marattiaceae</taxon>
        <taxon>Angiopteris</taxon>
    </lineage>
</organism>
<name>PETN_ANGEV</name>
<keyword id="KW-0150">Chloroplast</keyword>
<keyword id="KW-0249">Electron transport</keyword>
<keyword id="KW-0472">Membrane</keyword>
<keyword id="KW-0602">Photosynthesis</keyword>
<keyword id="KW-0934">Plastid</keyword>
<keyword id="KW-0793">Thylakoid</keyword>
<keyword id="KW-0812">Transmembrane</keyword>
<keyword id="KW-1133">Transmembrane helix</keyword>
<keyword id="KW-0813">Transport</keyword>
<accession>A2T325</accession>